<comment type="function">
    <text evidence="1">Core subunit of the mitochondrial membrane respiratory chain NADH dehydrogenase (Complex I) which catalyzes electron transfer from NADH through the respiratory chain, using ubiquinone as an electron acceptor. Part of the enzyme membrane arm which is embedded in the lipid bilayer and involved in proton translocation.</text>
</comment>
<comment type="catalytic activity">
    <reaction evidence="1">
        <text>a ubiquinone + NADH + 5 H(+)(in) = a ubiquinol + NAD(+) + 4 H(+)(out)</text>
        <dbReference type="Rhea" id="RHEA:29091"/>
        <dbReference type="Rhea" id="RHEA-COMP:9565"/>
        <dbReference type="Rhea" id="RHEA-COMP:9566"/>
        <dbReference type="ChEBI" id="CHEBI:15378"/>
        <dbReference type="ChEBI" id="CHEBI:16389"/>
        <dbReference type="ChEBI" id="CHEBI:17976"/>
        <dbReference type="ChEBI" id="CHEBI:57540"/>
        <dbReference type="ChEBI" id="CHEBI:57945"/>
        <dbReference type="EC" id="7.1.1.2"/>
    </reaction>
    <physiologicalReaction direction="left-to-right" evidence="1">
        <dbReference type="Rhea" id="RHEA:29092"/>
    </physiologicalReaction>
</comment>
<comment type="subunit">
    <text evidence="2">Core subunit of respiratory chain NADH dehydrogenase (Complex I) which is composed of 45 different subunits.</text>
</comment>
<comment type="subcellular location">
    <subcellularLocation>
        <location evidence="2">Mitochondrion inner membrane</location>
        <topology evidence="3">Multi-pass membrane protein</topology>
    </subcellularLocation>
</comment>
<comment type="similarity">
    <text evidence="4">Belongs to the complex I subunit 4L family.</text>
</comment>
<sequence length="98" mass="10859">MSITTLNIMVAFTMALLGMFTYRSHLMSSLLCLEGMMLSLFMLATIVSLNMNFTISFMFPVILLVFAACEAAVGLALLVMVSNTYGMDYIHNLNLLQC</sequence>
<organism>
    <name type="scientific">Ochotona collaris</name>
    <name type="common">Collared pika</name>
    <dbReference type="NCBI Taxonomy" id="134600"/>
    <lineage>
        <taxon>Eukaryota</taxon>
        <taxon>Metazoa</taxon>
        <taxon>Chordata</taxon>
        <taxon>Craniata</taxon>
        <taxon>Vertebrata</taxon>
        <taxon>Euteleostomi</taxon>
        <taxon>Mammalia</taxon>
        <taxon>Eutheria</taxon>
        <taxon>Euarchontoglires</taxon>
        <taxon>Glires</taxon>
        <taxon>Lagomorpha</taxon>
        <taxon>Ochotonidae</taxon>
        <taxon>Ochotona</taxon>
    </lineage>
</organism>
<keyword id="KW-0249">Electron transport</keyword>
<keyword id="KW-0472">Membrane</keyword>
<keyword id="KW-0496">Mitochondrion</keyword>
<keyword id="KW-0999">Mitochondrion inner membrane</keyword>
<keyword id="KW-0520">NAD</keyword>
<keyword id="KW-0679">Respiratory chain</keyword>
<keyword id="KW-1278">Translocase</keyword>
<keyword id="KW-0812">Transmembrane</keyword>
<keyword id="KW-1133">Transmembrane helix</keyword>
<keyword id="KW-0813">Transport</keyword>
<keyword id="KW-0830">Ubiquinone</keyword>
<protein>
    <recommendedName>
        <fullName>NADH-ubiquinone oxidoreductase chain 4L</fullName>
        <ecNumber>7.1.1.2</ecNumber>
    </recommendedName>
    <alternativeName>
        <fullName>NADH dehydrogenase subunit 4L</fullName>
    </alternativeName>
</protein>
<name>NU4LM_OCHCO</name>
<gene>
    <name type="primary">MT-ND4L</name>
    <name type="synonym">MTND4L</name>
    <name type="synonym">NADH4L</name>
    <name type="synonym">ND4L</name>
</gene>
<reference key="1">
    <citation type="journal article" date="2002" name="Gene">
        <title>Pika and vole mitochondrial genomes increase support for both rodent monophyly and glires.</title>
        <authorList>
            <person name="Lin Y.-H."/>
            <person name="Waddell P.J."/>
            <person name="Penny D."/>
        </authorList>
    </citation>
    <scope>NUCLEOTIDE SEQUENCE [GENOMIC DNA]</scope>
</reference>
<feature type="chain" id="PRO_0000275078" description="NADH-ubiquinone oxidoreductase chain 4L">
    <location>
        <begin position="1"/>
        <end position="98"/>
    </location>
</feature>
<feature type="transmembrane region" description="Helical" evidence="3">
    <location>
        <begin position="1"/>
        <end position="21"/>
    </location>
</feature>
<feature type="transmembrane region" description="Helical" evidence="3">
    <location>
        <begin position="29"/>
        <end position="49"/>
    </location>
</feature>
<feature type="transmembrane region" description="Helical" evidence="3">
    <location>
        <begin position="61"/>
        <end position="81"/>
    </location>
</feature>
<proteinExistence type="inferred from homology"/>
<dbReference type="EC" id="7.1.1.2"/>
<dbReference type="EMBL" id="AF348080">
    <property type="protein sequence ID" value="AAK71081.1"/>
    <property type="molecule type" value="Genomic_DNA"/>
</dbReference>
<dbReference type="RefSeq" id="NP_149456.1">
    <property type="nucleotide sequence ID" value="NC_003033.1"/>
</dbReference>
<dbReference type="SMR" id="Q953J9"/>
<dbReference type="GeneID" id="803518"/>
<dbReference type="CTD" id="4539"/>
<dbReference type="GO" id="GO:0005743">
    <property type="term" value="C:mitochondrial inner membrane"/>
    <property type="evidence" value="ECO:0000250"/>
    <property type="project" value="UniProtKB"/>
</dbReference>
<dbReference type="GO" id="GO:0045271">
    <property type="term" value="C:respiratory chain complex I"/>
    <property type="evidence" value="ECO:0000250"/>
    <property type="project" value="UniProtKB"/>
</dbReference>
<dbReference type="GO" id="GO:0008137">
    <property type="term" value="F:NADH dehydrogenase (ubiquinone) activity"/>
    <property type="evidence" value="ECO:0000250"/>
    <property type="project" value="UniProtKB"/>
</dbReference>
<dbReference type="GO" id="GO:0042773">
    <property type="term" value="P:ATP synthesis coupled electron transport"/>
    <property type="evidence" value="ECO:0007669"/>
    <property type="project" value="InterPro"/>
</dbReference>
<dbReference type="FunFam" id="1.10.287.3510:FF:000002">
    <property type="entry name" value="NADH-ubiquinone oxidoreductase chain 4L"/>
    <property type="match status" value="1"/>
</dbReference>
<dbReference type="Gene3D" id="1.10.287.3510">
    <property type="match status" value="1"/>
</dbReference>
<dbReference type="InterPro" id="IPR001133">
    <property type="entry name" value="NADH_UbQ_OxRdtase_chain4L/K"/>
</dbReference>
<dbReference type="InterPro" id="IPR039428">
    <property type="entry name" value="NUOK/Mnh_C1-like"/>
</dbReference>
<dbReference type="PANTHER" id="PTHR11434:SF0">
    <property type="entry name" value="NADH-UBIQUINONE OXIDOREDUCTASE CHAIN 4L"/>
    <property type="match status" value="1"/>
</dbReference>
<dbReference type="PANTHER" id="PTHR11434">
    <property type="entry name" value="NADH-UBIQUINONE OXIDOREDUCTASE SUBUNIT ND4L"/>
    <property type="match status" value="1"/>
</dbReference>
<dbReference type="Pfam" id="PF00420">
    <property type="entry name" value="Oxidored_q2"/>
    <property type="match status" value="1"/>
</dbReference>
<accession>Q953J9</accession>
<evidence type="ECO:0000250" key="1">
    <source>
        <dbReference type="UniProtKB" id="P03901"/>
    </source>
</evidence>
<evidence type="ECO:0000250" key="2">
    <source>
        <dbReference type="UniProtKB" id="P03902"/>
    </source>
</evidence>
<evidence type="ECO:0000255" key="3"/>
<evidence type="ECO:0000305" key="4"/>
<geneLocation type="mitochondrion"/>